<sequence length="445" mass="47575">MSNRKYFGTDGIRGRVGDAPITPDFVLKLGWAAGKVLARHGSRKIIIGKDTRISGYMLESALEAGLAAAGLSALFTGPMPTPAVAYLTRTFRAEAGIVISASHNPFYDNGIKFFSIDGTKLPDAVEEAIEAEMEKEISCVDSAELGKASRIVDAAGRYIEFCKATFPNELSLSELKIVVDCANGATYHIAPNVLRELGANVIAIGCEPNGVNINAEVGATDVRALQARVLAEKADLGIAFDGDGDRVIMVDHEGNKVDGDQIMYIIAREGLRQGQLRGGAVGTLMSNMGLELALKQLGIPFARAKVGDRYVLEKMQEKGWRIGAENSGHVILLDKTTTGDGIVAGLQVLAAMARNHMSLHDLCSGMKMFPQILVNVRYTADSGDPLEHESVKAVTAEVEAALGSRGRVLLRKSGTEPLIRVMVEGEDEAQVTEFAHRIADAVKAV</sequence>
<organism>
    <name type="scientific">Escherichia coli O7:K1 (strain IAI39 / ExPEC)</name>
    <dbReference type="NCBI Taxonomy" id="585057"/>
    <lineage>
        <taxon>Bacteria</taxon>
        <taxon>Pseudomonadati</taxon>
        <taxon>Pseudomonadota</taxon>
        <taxon>Gammaproteobacteria</taxon>
        <taxon>Enterobacterales</taxon>
        <taxon>Enterobacteriaceae</taxon>
        <taxon>Escherichia</taxon>
    </lineage>
</organism>
<evidence type="ECO:0000255" key="1">
    <source>
        <dbReference type="HAMAP-Rule" id="MF_01554"/>
    </source>
</evidence>
<gene>
    <name evidence="1" type="primary">glmM</name>
    <name type="ordered locus">ECIAI39_3671</name>
</gene>
<accession>B7NKP3</accession>
<keyword id="KW-0413">Isomerase</keyword>
<keyword id="KW-0460">Magnesium</keyword>
<keyword id="KW-0479">Metal-binding</keyword>
<keyword id="KW-0597">Phosphoprotein</keyword>
<dbReference type="EC" id="5.4.2.10" evidence="1"/>
<dbReference type="EMBL" id="CU928164">
    <property type="protein sequence ID" value="CAR19787.1"/>
    <property type="molecule type" value="Genomic_DNA"/>
</dbReference>
<dbReference type="RefSeq" id="WP_000071132.1">
    <property type="nucleotide sequence ID" value="NC_011750.1"/>
</dbReference>
<dbReference type="RefSeq" id="YP_002409574.1">
    <property type="nucleotide sequence ID" value="NC_011750.1"/>
</dbReference>
<dbReference type="SMR" id="B7NKP3"/>
<dbReference type="STRING" id="585057.ECIAI39_3671"/>
<dbReference type="KEGG" id="ect:ECIAI39_3671"/>
<dbReference type="PATRIC" id="fig|585057.6.peg.3804"/>
<dbReference type="HOGENOM" id="CLU_016950_7_0_6"/>
<dbReference type="Proteomes" id="UP000000749">
    <property type="component" value="Chromosome"/>
</dbReference>
<dbReference type="GO" id="GO:0005829">
    <property type="term" value="C:cytosol"/>
    <property type="evidence" value="ECO:0007669"/>
    <property type="project" value="TreeGrafter"/>
</dbReference>
<dbReference type="GO" id="GO:0000287">
    <property type="term" value="F:magnesium ion binding"/>
    <property type="evidence" value="ECO:0007669"/>
    <property type="project" value="UniProtKB-UniRule"/>
</dbReference>
<dbReference type="GO" id="GO:0008966">
    <property type="term" value="F:phosphoglucosamine mutase activity"/>
    <property type="evidence" value="ECO:0007669"/>
    <property type="project" value="UniProtKB-UniRule"/>
</dbReference>
<dbReference type="GO" id="GO:0004615">
    <property type="term" value="F:phosphomannomutase activity"/>
    <property type="evidence" value="ECO:0007669"/>
    <property type="project" value="TreeGrafter"/>
</dbReference>
<dbReference type="GO" id="GO:0005975">
    <property type="term" value="P:carbohydrate metabolic process"/>
    <property type="evidence" value="ECO:0007669"/>
    <property type="project" value="InterPro"/>
</dbReference>
<dbReference type="GO" id="GO:0009252">
    <property type="term" value="P:peptidoglycan biosynthetic process"/>
    <property type="evidence" value="ECO:0007669"/>
    <property type="project" value="TreeGrafter"/>
</dbReference>
<dbReference type="GO" id="GO:0006048">
    <property type="term" value="P:UDP-N-acetylglucosamine biosynthetic process"/>
    <property type="evidence" value="ECO:0007669"/>
    <property type="project" value="TreeGrafter"/>
</dbReference>
<dbReference type="CDD" id="cd05802">
    <property type="entry name" value="GlmM"/>
    <property type="match status" value="1"/>
</dbReference>
<dbReference type="FunFam" id="3.30.310.50:FF:000001">
    <property type="entry name" value="Phosphoglucosamine mutase"/>
    <property type="match status" value="1"/>
</dbReference>
<dbReference type="FunFam" id="3.40.120.10:FF:000001">
    <property type="entry name" value="Phosphoglucosamine mutase"/>
    <property type="match status" value="1"/>
</dbReference>
<dbReference type="FunFam" id="3.40.120.10:FF:000002">
    <property type="entry name" value="Phosphoglucosamine mutase"/>
    <property type="match status" value="1"/>
</dbReference>
<dbReference type="Gene3D" id="3.40.120.10">
    <property type="entry name" value="Alpha-D-Glucose-1,6-Bisphosphate, subunit A, domain 3"/>
    <property type="match status" value="3"/>
</dbReference>
<dbReference type="Gene3D" id="3.30.310.50">
    <property type="entry name" value="Alpha-D-phosphohexomutase, C-terminal domain"/>
    <property type="match status" value="1"/>
</dbReference>
<dbReference type="HAMAP" id="MF_01554_B">
    <property type="entry name" value="GlmM_B"/>
    <property type="match status" value="1"/>
</dbReference>
<dbReference type="InterPro" id="IPR005844">
    <property type="entry name" value="A-D-PHexomutase_a/b/a-I"/>
</dbReference>
<dbReference type="InterPro" id="IPR016055">
    <property type="entry name" value="A-D-PHexomutase_a/b/a-I/II/III"/>
</dbReference>
<dbReference type="InterPro" id="IPR005845">
    <property type="entry name" value="A-D-PHexomutase_a/b/a-II"/>
</dbReference>
<dbReference type="InterPro" id="IPR005846">
    <property type="entry name" value="A-D-PHexomutase_a/b/a-III"/>
</dbReference>
<dbReference type="InterPro" id="IPR005843">
    <property type="entry name" value="A-D-PHexomutase_C"/>
</dbReference>
<dbReference type="InterPro" id="IPR036900">
    <property type="entry name" value="A-D-PHexomutase_C_sf"/>
</dbReference>
<dbReference type="InterPro" id="IPR016066">
    <property type="entry name" value="A-D-PHexomutase_CS"/>
</dbReference>
<dbReference type="InterPro" id="IPR005841">
    <property type="entry name" value="Alpha-D-phosphohexomutase_SF"/>
</dbReference>
<dbReference type="InterPro" id="IPR006352">
    <property type="entry name" value="GlmM_bact"/>
</dbReference>
<dbReference type="InterPro" id="IPR050060">
    <property type="entry name" value="Phosphoglucosamine_mutase"/>
</dbReference>
<dbReference type="NCBIfam" id="TIGR01455">
    <property type="entry name" value="glmM"/>
    <property type="match status" value="1"/>
</dbReference>
<dbReference type="NCBIfam" id="NF008139">
    <property type="entry name" value="PRK10887.1"/>
    <property type="match status" value="1"/>
</dbReference>
<dbReference type="PANTHER" id="PTHR42946:SF1">
    <property type="entry name" value="PHOSPHOGLUCOMUTASE (ALPHA-D-GLUCOSE-1,6-BISPHOSPHATE-DEPENDENT)"/>
    <property type="match status" value="1"/>
</dbReference>
<dbReference type="PANTHER" id="PTHR42946">
    <property type="entry name" value="PHOSPHOHEXOSE MUTASE"/>
    <property type="match status" value="1"/>
</dbReference>
<dbReference type="Pfam" id="PF02878">
    <property type="entry name" value="PGM_PMM_I"/>
    <property type="match status" value="1"/>
</dbReference>
<dbReference type="Pfam" id="PF02879">
    <property type="entry name" value="PGM_PMM_II"/>
    <property type="match status" value="1"/>
</dbReference>
<dbReference type="Pfam" id="PF02880">
    <property type="entry name" value="PGM_PMM_III"/>
    <property type="match status" value="1"/>
</dbReference>
<dbReference type="Pfam" id="PF00408">
    <property type="entry name" value="PGM_PMM_IV"/>
    <property type="match status" value="1"/>
</dbReference>
<dbReference type="PRINTS" id="PR00509">
    <property type="entry name" value="PGMPMM"/>
</dbReference>
<dbReference type="SUPFAM" id="SSF55957">
    <property type="entry name" value="Phosphoglucomutase, C-terminal domain"/>
    <property type="match status" value="1"/>
</dbReference>
<dbReference type="SUPFAM" id="SSF53738">
    <property type="entry name" value="Phosphoglucomutase, first 3 domains"/>
    <property type="match status" value="3"/>
</dbReference>
<dbReference type="PROSITE" id="PS00710">
    <property type="entry name" value="PGM_PMM"/>
    <property type="match status" value="1"/>
</dbReference>
<protein>
    <recommendedName>
        <fullName evidence="1">Phosphoglucosamine mutase</fullName>
        <ecNumber evidence="1">5.4.2.10</ecNumber>
    </recommendedName>
</protein>
<reference key="1">
    <citation type="journal article" date="2009" name="PLoS Genet.">
        <title>Organised genome dynamics in the Escherichia coli species results in highly diverse adaptive paths.</title>
        <authorList>
            <person name="Touchon M."/>
            <person name="Hoede C."/>
            <person name="Tenaillon O."/>
            <person name="Barbe V."/>
            <person name="Baeriswyl S."/>
            <person name="Bidet P."/>
            <person name="Bingen E."/>
            <person name="Bonacorsi S."/>
            <person name="Bouchier C."/>
            <person name="Bouvet O."/>
            <person name="Calteau A."/>
            <person name="Chiapello H."/>
            <person name="Clermont O."/>
            <person name="Cruveiller S."/>
            <person name="Danchin A."/>
            <person name="Diard M."/>
            <person name="Dossat C."/>
            <person name="Karoui M.E."/>
            <person name="Frapy E."/>
            <person name="Garry L."/>
            <person name="Ghigo J.M."/>
            <person name="Gilles A.M."/>
            <person name="Johnson J."/>
            <person name="Le Bouguenec C."/>
            <person name="Lescat M."/>
            <person name="Mangenot S."/>
            <person name="Martinez-Jehanne V."/>
            <person name="Matic I."/>
            <person name="Nassif X."/>
            <person name="Oztas S."/>
            <person name="Petit M.A."/>
            <person name="Pichon C."/>
            <person name="Rouy Z."/>
            <person name="Ruf C.S."/>
            <person name="Schneider D."/>
            <person name="Tourret J."/>
            <person name="Vacherie B."/>
            <person name="Vallenet D."/>
            <person name="Medigue C."/>
            <person name="Rocha E.P.C."/>
            <person name="Denamur E."/>
        </authorList>
    </citation>
    <scope>NUCLEOTIDE SEQUENCE [LARGE SCALE GENOMIC DNA]</scope>
    <source>
        <strain>IAI39 / ExPEC</strain>
    </source>
</reference>
<name>GLMM_ECO7I</name>
<proteinExistence type="inferred from homology"/>
<comment type="function">
    <text evidence="1">Catalyzes the conversion of glucosamine-6-phosphate to glucosamine-1-phosphate.</text>
</comment>
<comment type="catalytic activity">
    <reaction evidence="1">
        <text>alpha-D-glucosamine 1-phosphate = D-glucosamine 6-phosphate</text>
        <dbReference type="Rhea" id="RHEA:23424"/>
        <dbReference type="ChEBI" id="CHEBI:58516"/>
        <dbReference type="ChEBI" id="CHEBI:58725"/>
        <dbReference type="EC" id="5.4.2.10"/>
    </reaction>
</comment>
<comment type="cofactor">
    <cofactor evidence="1">
        <name>Mg(2+)</name>
        <dbReference type="ChEBI" id="CHEBI:18420"/>
    </cofactor>
    <text evidence="1">Binds 1 Mg(2+) ion per subunit.</text>
</comment>
<comment type="PTM">
    <text evidence="1">Activated by phosphorylation.</text>
</comment>
<comment type="similarity">
    <text evidence="1">Belongs to the phosphohexose mutase family.</text>
</comment>
<feature type="chain" id="PRO_1000201096" description="Phosphoglucosamine mutase">
    <location>
        <begin position="1"/>
        <end position="445"/>
    </location>
</feature>
<feature type="active site" description="Phosphoserine intermediate" evidence="1">
    <location>
        <position position="102"/>
    </location>
</feature>
<feature type="binding site" description="via phosphate group" evidence="1">
    <location>
        <position position="102"/>
    </location>
    <ligand>
        <name>Mg(2+)</name>
        <dbReference type="ChEBI" id="CHEBI:18420"/>
    </ligand>
</feature>
<feature type="binding site" evidence="1">
    <location>
        <position position="241"/>
    </location>
    <ligand>
        <name>Mg(2+)</name>
        <dbReference type="ChEBI" id="CHEBI:18420"/>
    </ligand>
</feature>
<feature type="binding site" evidence="1">
    <location>
        <position position="243"/>
    </location>
    <ligand>
        <name>Mg(2+)</name>
        <dbReference type="ChEBI" id="CHEBI:18420"/>
    </ligand>
</feature>
<feature type="binding site" evidence="1">
    <location>
        <position position="245"/>
    </location>
    <ligand>
        <name>Mg(2+)</name>
        <dbReference type="ChEBI" id="CHEBI:18420"/>
    </ligand>
</feature>
<feature type="modified residue" description="Phosphoserine" evidence="1">
    <location>
        <position position="102"/>
    </location>
</feature>